<organism>
    <name type="scientific">Staphylococcus aureus (strain N315)</name>
    <dbReference type="NCBI Taxonomy" id="158879"/>
    <lineage>
        <taxon>Bacteria</taxon>
        <taxon>Bacillati</taxon>
        <taxon>Bacillota</taxon>
        <taxon>Bacilli</taxon>
        <taxon>Bacillales</taxon>
        <taxon>Staphylococcaceae</taxon>
        <taxon>Staphylococcus</taxon>
    </lineage>
</organism>
<reference key="1">
    <citation type="journal article" date="2001" name="Lancet">
        <title>Whole genome sequencing of meticillin-resistant Staphylococcus aureus.</title>
        <authorList>
            <person name="Kuroda M."/>
            <person name="Ohta T."/>
            <person name="Uchiyama I."/>
            <person name="Baba T."/>
            <person name="Yuzawa H."/>
            <person name="Kobayashi I."/>
            <person name="Cui L."/>
            <person name="Oguchi A."/>
            <person name="Aoki K."/>
            <person name="Nagai Y."/>
            <person name="Lian J.-Q."/>
            <person name="Ito T."/>
            <person name="Kanamori M."/>
            <person name="Matsumaru H."/>
            <person name="Maruyama A."/>
            <person name="Murakami H."/>
            <person name="Hosoyama A."/>
            <person name="Mizutani-Ui Y."/>
            <person name="Takahashi N.K."/>
            <person name="Sawano T."/>
            <person name="Inoue R."/>
            <person name="Kaito C."/>
            <person name="Sekimizu K."/>
            <person name="Hirakawa H."/>
            <person name="Kuhara S."/>
            <person name="Goto S."/>
            <person name="Yabuzaki J."/>
            <person name="Kanehisa M."/>
            <person name="Yamashita A."/>
            <person name="Oshima K."/>
            <person name="Furuya K."/>
            <person name="Yoshino C."/>
            <person name="Shiba T."/>
            <person name="Hattori M."/>
            <person name="Ogasawara N."/>
            <person name="Hayashi H."/>
            <person name="Hiramatsu K."/>
        </authorList>
    </citation>
    <scope>NUCLEOTIDE SEQUENCE [LARGE SCALE GENOMIC DNA]</scope>
    <source>
        <strain>N315</strain>
    </source>
</reference>
<reference key="2">
    <citation type="submission" date="2007-10" db="UniProtKB">
        <title>Shotgun proteomic analysis of total and membrane protein extracts of S. aureus strain N315.</title>
        <authorList>
            <person name="Vaezzadeh A.R."/>
            <person name="Deshusses J."/>
            <person name="Lescuyer P."/>
            <person name="Hochstrasser D.F."/>
        </authorList>
    </citation>
    <scope>IDENTIFICATION BY MASS SPECTROMETRY [LARGE SCALE ANALYSIS]</scope>
    <source>
        <strain>N315</strain>
    </source>
</reference>
<comment type="function">
    <text evidence="1">Releases the supercoiling and torsional tension of DNA, which is introduced during the DNA replication and transcription, by transiently cleaving and rejoining one strand of the DNA duplex. Introduces a single-strand break via transesterification at a target site in duplex DNA. The scissile phosphodiester is attacked by the catalytic tyrosine of the enzyme, resulting in the formation of a DNA-(5'-phosphotyrosyl)-enzyme intermediate and the expulsion of a 3'-OH DNA strand. The free DNA strand then undergoes passage around the unbroken strand, thus removing DNA supercoils. Finally, in the religation step, the DNA 3'-OH attacks the covalent intermediate to expel the active-site tyrosine and restore the DNA phosphodiester backbone.</text>
</comment>
<comment type="catalytic activity">
    <reaction evidence="1">
        <text>ATP-independent breakage of single-stranded DNA, followed by passage and rejoining.</text>
        <dbReference type="EC" id="5.6.2.1"/>
    </reaction>
</comment>
<comment type="cofactor">
    <cofactor evidence="1">
        <name>Mg(2+)</name>
        <dbReference type="ChEBI" id="CHEBI:18420"/>
    </cofactor>
</comment>
<comment type="subunit">
    <text evidence="1">Monomer.</text>
</comment>
<comment type="similarity">
    <text evidence="1">Belongs to the type IA topoisomerase family.</text>
</comment>
<evidence type="ECO:0000255" key="1">
    <source>
        <dbReference type="HAMAP-Rule" id="MF_00952"/>
    </source>
</evidence>
<evidence type="ECO:0000255" key="2">
    <source>
        <dbReference type="PROSITE-ProRule" id="PRU01383"/>
    </source>
</evidence>
<evidence type="ECO:0000256" key="3">
    <source>
        <dbReference type="SAM" id="MobiDB-lite"/>
    </source>
</evidence>
<protein>
    <recommendedName>
        <fullName evidence="1">DNA topoisomerase 1</fullName>
        <ecNumber evidence="1">5.6.2.1</ecNumber>
    </recommendedName>
    <alternativeName>
        <fullName evidence="1">DNA topoisomerase I</fullName>
    </alternativeName>
    <alternativeName>
        <fullName>Omega-protein</fullName>
    </alternativeName>
    <alternativeName>
        <fullName>Relaxing enzyme</fullName>
    </alternativeName>
    <alternativeName>
        <fullName>Swivelase</fullName>
    </alternativeName>
    <alternativeName>
        <fullName>Untwisting enzyme</fullName>
    </alternativeName>
</protein>
<proteinExistence type="evidence at protein level"/>
<accession>Q7A5Y5</accession>
<keyword id="KW-0238">DNA-binding</keyword>
<keyword id="KW-0413">Isomerase</keyword>
<keyword id="KW-0460">Magnesium</keyword>
<keyword id="KW-0479">Metal-binding</keyword>
<keyword id="KW-0677">Repeat</keyword>
<keyword id="KW-0799">Topoisomerase</keyword>
<keyword id="KW-0862">Zinc</keyword>
<keyword id="KW-0863">Zinc-finger</keyword>
<sequence>MADNLVIVESPAKAKTIEKYLGKKYKVIASMGHVRDLPRSQMGVDTEDNYEPKYITIRGKGPVVKELKKHAKKAKNVFLASDPDREGEAIAWHLSKILELEDSKENRVVFNEITKDAVKESFKNPREIEMNLVDAQQARRILDRLVGYNISPVLWKKVKKGLSAGRVQSVALRLVIDRENEIRNFKPEEYWTIEGEFRYKKSKFNAKFLHYKNKPFKLKTKKDVEKITAALDGDQFEITNVTKKEKTRNPANPFTTSTLQQEAARKLNFKARKTMMVAQQLYEGIDLKKQGTIGLITYMRTDSTRISDTAKAEAKQYITDKYGESYTSKRKASGKQGDQDAHEAIRPSSTMRTPDDMKSFLTKDQYRLYKLIWERFVASQMAPAILDTVSLDITQGDIKFRANGQTIKFKGFMTLYVETKDDSDSEKENKLPKLEQGDKVTATQIEPAQHYTQPPPRYTEARLVKTLEELKIGRPSTYAPTIDTIQKRNYVKLESKRFVPTELGEIVHEQVKEYFPEIIDVEFTVNMETLLDKIAEGDITWRKVIDGFFSSFKQDVERAEEEMEKIEIKDEPAGEDCEVCGSPMVIKMGRYGKFMACSNFPDCRNTKAIVKSIGVKCPKCNDGDVVERKSKKNRVFYGCSKYPECDFISWDKPIGRDCPKCNQYLVENKKGKTTQVICSNCDYKEAAQK</sequence>
<feature type="chain" id="PRO_0000285941" description="DNA topoisomerase 1">
    <location>
        <begin position="1"/>
        <end position="689"/>
    </location>
</feature>
<feature type="domain" description="Toprim" evidence="1">
    <location>
        <begin position="3"/>
        <end position="113"/>
    </location>
</feature>
<feature type="domain" description="Topo IA-type catalytic" evidence="2">
    <location>
        <begin position="129"/>
        <end position="557"/>
    </location>
</feature>
<feature type="zinc finger region" description="C4-type 1">
    <location>
        <begin position="577"/>
        <end position="603"/>
    </location>
</feature>
<feature type="zinc finger region" description="C4-type 2">
    <location>
        <begin position="617"/>
        <end position="645"/>
    </location>
</feature>
<feature type="zinc finger region" description="C4-type 3">
    <location>
        <begin position="658"/>
        <end position="681"/>
    </location>
</feature>
<feature type="region of interest" description="Interaction with DNA" evidence="1">
    <location>
        <begin position="163"/>
        <end position="168"/>
    </location>
</feature>
<feature type="region of interest" description="Disordered" evidence="3">
    <location>
        <begin position="328"/>
        <end position="357"/>
    </location>
</feature>
<feature type="active site" description="O-(5'-phospho-DNA)-tyrosine intermediate" evidence="2">
    <location>
        <position position="298"/>
    </location>
</feature>
<feature type="binding site" evidence="1">
    <location>
        <position position="9"/>
    </location>
    <ligand>
        <name>Mg(2+)</name>
        <dbReference type="ChEBI" id="CHEBI:18420"/>
        <note>catalytic</note>
    </ligand>
</feature>
<feature type="binding site" evidence="1">
    <location>
        <position position="82"/>
    </location>
    <ligand>
        <name>Mg(2+)</name>
        <dbReference type="ChEBI" id="CHEBI:18420"/>
        <note>catalytic</note>
    </ligand>
</feature>
<feature type="site" description="Interaction with DNA" evidence="1">
    <location>
        <position position="33"/>
    </location>
</feature>
<feature type="site" description="Interaction with DNA" evidence="1">
    <location>
        <position position="139"/>
    </location>
</feature>
<feature type="site" description="Interaction with DNA" evidence="1">
    <location>
        <position position="140"/>
    </location>
</feature>
<feature type="site" description="Interaction with DNA" evidence="1">
    <location>
        <position position="143"/>
    </location>
</feature>
<feature type="site" description="Interaction with DNA" evidence="1">
    <location>
        <position position="148"/>
    </location>
</feature>
<feature type="site" description="Interaction with DNA" evidence="1">
    <location>
        <position position="155"/>
    </location>
</feature>
<feature type="site" description="Interaction with DNA" evidence="1">
    <location>
        <position position="300"/>
    </location>
</feature>
<feature type="site" description="Interaction with DNA" evidence="1">
    <location>
        <position position="488"/>
    </location>
</feature>
<gene>
    <name evidence="1" type="primary">topA</name>
    <name type="ordered locus">SA1093</name>
</gene>
<name>TOP1_STAAN</name>
<dbReference type="EC" id="5.6.2.1" evidence="1"/>
<dbReference type="EMBL" id="BA000018">
    <property type="protein sequence ID" value="BAB42345.1"/>
    <property type="molecule type" value="Genomic_DNA"/>
</dbReference>
<dbReference type="PIR" id="E89898">
    <property type="entry name" value="E89898"/>
</dbReference>
<dbReference type="SMR" id="Q7A5Y5"/>
<dbReference type="EnsemblBacteria" id="BAB42345">
    <property type="protein sequence ID" value="BAB42345"/>
    <property type="gene ID" value="BAB42345"/>
</dbReference>
<dbReference type="KEGG" id="sau:SA1093"/>
<dbReference type="HOGENOM" id="CLU_002929_4_3_9"/>
<dbReference type="GO" id="GO:0005694">
    <property type="term" value="C:chromosome"/>
    <property type="evidence" value="ECO:0007669"/>
    <property type="project" value="InterPro"/>
</dbReference>
<dbReference type="GO" id="GO:0003677">
    <property type="term" value="F:DNA binding"/>
    <property type="evidence" value="ECO:0007669"/>
    <property type="project" value="UniProtKB-KW"/>
</dbReference>
<dbReference type="GO" id="GO:0003917">
    <property type="term" value="F:DNA topoisomerase type I (single strand cut, ATP-independent) activity"/>
    <property type="evidence" value="ECO:0007669"/>
    <property type="project" value="UniProtKB-UniRule"/>
</dbReference>
<dbReference type="GO" id="GO:0008270">
    <property type="term" value="F:zinc ion binding"/>
    <property type="evidence" value="ECO:0007669"/>
    <property type="project" value="UniProtKB-KW"/>
</dbReference>
<dbReference type="GO" id="GO:0006265">
    <property type="term" value="P:DNA topological change"/>
    <property type="evidence" value="ECO:0007669"/>
    <property type="project" value="UniProtKB-UniRule"/>
</dbReference>
<dbReference type="CDD" id="cd00186">
    <property type="entry name" value="TOP1Ac"/>
    <property type="match status" value="1"/>
</dbReference>
<dbReference type="CDD" id="cd03363">
    <property type="entry name" value="TOPRIM_TopoIA_TopoI"/>
    <property type="match status" value="1"/>
</dbReference>
<dbReference type="Gene3D" id="3.40.50.140">
    <property type="match status" value="1"/>
</dbReference>
<dbReference type="Gene3D" id="3.30.65.10">
    <property type="entry name" value="Bacterial Topoisomerase I, domain 1"/>
    <property type="match status" value="2"/>
</dbReference>
<dbReference type="Gene3D" id="1.10.460.10">
    <property type="entry name" value="Topoisomerase I, domain 2"/>
    <property type="match status" value="1"/>
</dbReference>
<dbReference type="Gene3D" id="2.70.20.10">
    <property type="entry name" value="Topoisomerase I, domain 3"/>
    <property type="match status" value="1"/>
</dbReference>
<dbReference type="Gene3D" id="1.10.290.10">
    <property type="entry name" value="Topoisomerase I, domain 4"/>
    <property type="match status" value="1"/>
</dbReference>
<dbReference type="HAMAP" id="MF_00952">
    <property type="entry name" value="Topoisom_1_prok"/>
    <property type="match status" value="1"/>
</dbReference>
<dbReference type="InterPro" id="IPR000380">
    <property type="entry name" value="Topo_IA"/>
</dbReference>
<dbReference type="InterPro" id="IPR003601">
    <property type="entry name" value="Topo_IA_2"/>
</dbReference>
<dbReference type="InterPro" id="IPR023406">
    <property type="entry name" value="Topo_IA_AS"/>
</dbReference>
<dbReference type="InterPro" id="IPR013497">
    <property type="entry name" value="Topo_IA_cen"/>
</dbReference>
<dbReference type="InterPro" id="IPR013824">
    <property type="entry name" value="Topo_IA_cen_sub1"/>
</dbReference>
<dbReference type="InterPro" id="IPR013825">
    <property type="entry name" value="Topo_IA_cen_sub2"/>
</dbReference>
<dbReference type="InterPro" id="IPR013826">
    <property type="entry name" value="Topo_IA_cen_sub3"/>
</dbReference>
<dbReference type="InterPro" id="IPR023405">
    <property type="entry name" value="Topo_IA_core_domain"/>
</dbReference>
<dbReference type="InterPro" id="IPR003602">
    <property type="entry name" value="Topo_IA_DNA-bd_dom"/>
</dbReference>
<dbReference type="InterPro" id="IPR013498">
    <property type="entry name" value="Topo_IA_Znf"/>
</dbReference>
<dbReference type="InterPro" id="IPR005733">
    <property type="entry name" value="TopoI_bac-type"/>
</dbReference>
<dbReference type="InterPro" id="IPR028612">
    <property type="entry name" value="Topoisom_1_IA"/>
</dbReference>
<dbReference type="InterPro" id="IPR006171">
    <property type="entry name" value="TOPRIM_dom"/>
</dbReference>
<dbReference type="InterPro" id="IPR034149">
    <property type="entry name" value="TOPRIM_TopoI"/>
</dbReference>
<dbReference type="NCBIfam" id="TIGR01051">
    <property type="entry name" value="topA_bact"/>
    <property type="match status" value="1"/>
</dbReference>
<dbReference type="PANTHER" id="PTHR42785:SF1">
    <property type="entry name" value="DNA TOPOISOMERASE"/>
    <property type="match status" value="1"/>
</dbReference>
<dbReference type="PANTHER" id="PTHR42785">
    <property type="entry name" value="DNA TOPOISOMERASE, TYPE IA, CORE"/>
    <property type="match status" value="1"/>
</dbReference>
<dbReference type="Pfam" id="PF01131">
    <property type="entry name" value="Topoisom_bac"/>
    <property type="match status" value="1"/>
</dbReference>
<dbReference type="Pfam" id="PF01751">
    <property type="entry name" value="Toprim"/>
    <property type="match status" value="1"/>
</dbReference>
<dbReference type="Pfam" id="PF01396">
    <property type="entry name" value="Zn_ribbon_Top1"/>
    <property type="match status" value="3"/>
</dbReference>
<dbReference type="PRINTS" id="PR00417">
    <property type="entry name" value="PRTPISMRASEI"/>
</dbReference>
<dbReference type="SMART" id="SM00437">
    <property type="entry name" value="TOP1Ac"/>
    <property type="match status" value="1"/>
</dbReference>
<dbReference type="SMART" id="SM00436">
    <property type="entry name" value="TOP1Bc"/>
    <property type="match status" value="1"/>
</dbReference>
<dbReference type="SMART" id="SM00493">
    <property type="entry name" value="TOPRIM"/>
    <property type="match status" value="1"/>
</dbReference>
<dbReference type="SUPFAM" id="SSF56712">
    <property type="entry name" value="Prokaryotic type I DNA topoisomerase"/>
    <property type="match status" value="1"/>
</dbReference>
<dbReference type="PROSITE" id="PS00396">
    <property type="entry name" value="TOPO_IA_1"/>
    <property type="match status" value="1"/>
</dbReference>
<dbReference type="PROSITE" id="PS52039">
    <property type="entry name" value="TOPO_IA_2"/>
    <property type="match status" value="1"/>
</dbReference>
<dbReference type="PROSITE" id="PS50880">
    <property type="entry name" value="TOPRIM"/>
    <property type="match status" value="1"/>
</dbReference>